<protein>
    <recommendedName>
        <fullName evidence="1">Urease accessory protein UreE</fullName>
    </recommendedName>
</protein>
<gene>
    <name evidence="1" type="primary">ureE</name>
    <name type="ordered locus">SaurJH1_2358</name>
</gene>
<sequence length="150" mass="17340">MIVEEIQGNIANLSNSEKQKHVEKVYLENSDLVKRIQRVVTDHGTEIGIRLKQPIDLQYGDILYADDHNMIIVDVNSEDLLVIQPRTLQEMGDIAHQLGNRHLPAQFTETEMLVQYDYLVEDLLKSLGIPYVREDRKVNKAFRHIGHSHD</sequence>
<keyword id="KW-0143">Chaperone</keyword>
<keyword id="KW-0963">Cytoplasm</keyword>
<keyword id="KW-0533">Nickel</keyword>
<keyword id="KW-0996">Nickel insertion</keyword>
<name>UREE_STAA2</name>
<evidence type="ECO:0000255" key="1">
    <source>
        <dbReference type="HAMAP-Rule" id="MF_00822"/>
    </source>
</evidence>
<comment type="function">
    <text evidence="1">Involved in urease metallocenter assembly. Binds nickel. Probably functions as a nickel donor during metallocenter assembly.</text>
</comment>
<comment type="subcellular location">
    <subcellularLocation>
        <location evidence="1">Cytoplasm</location>
    </subcellularLocation>
</comment>
<comment type="similarity">
    <text evidence="1">Belongs to the UreE family.</text>
</comment>
<organism>
    <name type="scientific">Staphylococcus aureus (strain JH1)</name>
    <dbReference type="NCBI Taxonomy" id="359787"/>
    <lineage>
        <taxon>Bacteria</taxon>
        <taxon>Bacillati</taxon>
        <taxon>Bacillota</taxon>
        <taxon>Bacilli</taxon>
        <taxon>Bacillales</taxon>
        <taxon>Staphylococcaceae</taxon>
        <taxon>Staphylococcus</taxon>
    </lineage>
</organism>
<dbReference type="EMBL" id="CP000736">
    <property type="protein sequence ID" value="ABR53183.1"/>
    <property type="molecule type" value="Genomic_DNA"/>
</dbReference>
<dbReference type="SMR" id="A6U415"/>
<dbReference type="KEGG" id="sah:SaurJH1_2358"/>
<dbReference type="HOGENOM" id="CLU_093757_3_1_9"/>
<dbReference type="GO" id="GO:0005737">
    <property type="term" value="C:cytoplasm"/>
    <property type="evidence" value="ECO:0007669"/>
    <property type="project" value="UniProtKB-SubCell"/>
</dbReference>
<dbReference type="GO" id="GO:0016151">
    <property type="term" value="F:nickel cation binding"/>
    <property type="evidence" value="ECO:0007669"/>
    <property type="project" value="UniProtKB-UniRule"/>
</dbReference>
<dbReference type="GO" id="GO:0051082">
    <property type="term" value="F:unfolded protein binding"/>
    <property type="evidence" value="ECO:0007669"/>
    <property type="project" value="UniProtKB-UniRule"/>
</dbReference>
<dbReference type="GO" id="GO:0006457">
    <property type="term" value="P:protein folding"/>
    <property type="evidence" value="ECO:0007669"/>
    <property type="project" value="InterPro"/>
</dbReference>
<dbReference type="GO" id="GO:0065003">
    <property type="term" value="P:protein-containing complex assembly"/>
    <property type="evidence" value="ECO:0007669"/>
    <property type="project" value="InterPro"/>
</dbReference>
<dbReference type="GO" id="GO:0019627">
    <property type="term" value="P:urea metabolic process"/>
    <property type="evidence" value="ECO:0007669"/>
    <property type="project" value="InterPro"/>
</dbReference>
<dbReference type="CDD" id="cd00571">
    <property type="entry name" value="UreE"/>
    <property type="match status" value="1"/>
</dbReference>
<dbReference type="Gene3D" id="2.60.260.20">
    <property type="entry name" value="Urease metallochaperone UreE, N-terminal domain"/>
    <property type="match status" value="1"/>
</dbReference>
<dbReference type="Gene3D" id="3.30.70.790">
    <property type="entry name" value="UreE, C-terminal domain"/>
    <property type="match status" value="1"/>
</dbReference>
<dbReference type="HAMAP" id="MF_00822">
    <property type="entry name" value="UreE"/>
    <property type="match status" value="1"/>
</dbReference>
<dbReference type="InterPro" id="IPR012406">
    <property type="entry name" value="UreE"/>
</dbReference>
<dbReference type="InterPro" id="IPR007864">
    <property type="entry name" value="UreE_C_dom"/>
</dbReference>
<dbReference type="InterPro" id="IPR004029">
    <property type="entry name" value="UreE_N"/>
</dbReference>
<dbReference type="InterPro" id="IPR036118">
    <property type="entry name" value="UreE_N_sf"/>
</dbReference>
<dbReference type="NCBIfam" id="NF009755">
    <property type="entry name" value="PRK13261.2-1"/>
    <property type="match status" value="1"/>
</dbReference>
<dbReference type="Pfam" id="PF05194">
    <property type="entry name" value="UreE_C"/>
    <property type="match status" value="1"/>
</dbReference>
<dbReference type="Pfam" id="PF02814">
    <property type="entry name" value="UreE_N"/>
    <property type="match status" value="1"/>
</dbReference>
<dbReference type="PIRSF" id="PIRSF036402">
    <property type="entry name" value="Ureas_acces_UreE"/>
    <property type="match status" value="1"/>
</dbReference>
<dbReference type="SMART" id="SM00988">
    <property type="entry name" value="UreE_N"/>
    <property type="match status" value="1"/>
</dbReference>
<dbReference type="SUPFAM" id="SSF69737">
    <property type="entry name" value="Urease metallochaperone UreE, C-terminal domain"/>
    <property type="match status" value="1"/>
</dbReference>
<dbReference type="SUPFAM" id="SSF69287">
    <property type="entry name" value="Urease metallochaperone UreE, N-terminal domain"/>
    <property type="match status" value="1"/>
</dbReference>
<reference key="1">
    <citation type="submission" date="2007-06" db="EMBL/GenBank/DDBJ databases">
        <title>Complete sequence of chromosome of Staphylococcus aureus subsp. aureus JH1.</title>
        <authorList>
            <consortium name="US DOE Joint Genome Institute"/>
            <person name="Copeland A."/>
            <person name="Lucas S."/>
            <person name="Lapidus A."/>
            <person name="Barry K."/>
            <person name="Detter J.C."/>
            <person name="Glavina del Rio T."/>
            <person name="Hammon N."/>
            <person name="Israni S."/>
            <person name="Dalin E."/>
            <person name="Tice H."/>
            <person name="Pitluck S."/>
            <person name="Chain P."/>
            <person name="Malfatti S."/>
            <person name="Shin M."/>
            <person name="Vergez L."/>
            <person name="Schmutz J."/>
            <person name="Larimer F."/>
            <person name="Land M."/>
            <person name="Hauser L."/>
            <person name="Kyrpides N."/>
            <person name="Ivanova N."/>
            <person name="Tomasz A."/>
            <person name="Richardson P."/>
        </authorList>
    </citation>
    <scope>NUCLEOTIDE SEQUENCE [LARGE SCALE GENOMIC DNA]</scope>
    <source>
        <strain>JH1</strain>
    </source>
</reference>
<proteinExistence type="inferred from homology"/>
<feature type="chain" id="PRO_1000083911" description="Urease accessory protein UreE">
    <location>
        <begin position="1"/>
        <end position="150"/>
    </location>
</feature>
<accession>A6U415</accession>